<sequence length="292" mass="30578">MSESLGSVPGSLRSGVISPGLSLGADISSFTEYLRAHAPDQLPQARAEAMGLHRAADDIPHGTTIVAVSYPGGVILAGDRRATMGNLIATRDVKKVYITDEYSAAGIAGTAGIAIEMVRLFAVELEHYEKLEGVPLTLDGKVSRLASMVRGNLGAALQGLAAVPLLVGYDIDHDDPTERGRIFSFDVAGDRHEEFGGYQAIGSGSVFAKSSLKKLYRHDLDEASALAIAVEALYDAADDDSATGGPDIVRKIFPLAAVVDAGGAREVDAESIEAAARAIVERRAAEHEGGPR</sequence>
<organism>
    <name type="scientific">Gordonia bronchialis (strain ATCC 25592 / DSM 43247 / BCRC 13721 / JCM 3198 / KCTC 3076 / NBRC 16047 / NCTC 10667)</name>
    <name type="common">Rhodococcus bronchialis</name>
    <dbReference type="NCBI Taxonomy" id="526226"/>
    <lineage>
        <taxon>Bacteria</taxon>
        <taxon>Bacillati</taxon>
        <taxon>Actinomycetota</taxon>
        <taxon>Actinomycetes</taxon>
        <taxon>Mycobacteriales</taxon>
        <taxon>Gordoniaceae</taxon>
        <taxon>Gordonia</taxon>
    </lineage>
</organism>
<proteinExistence type="inferred from homology"/>
<dbReference type="EC" id="3.4.25.1" evidence="1"/>
<dbReference type="EMBL" id="CP001802">
    <property type="protein sequence ID" value="ACY21704.1"/>
    <property type="molecule type" value="Genomic_DNA"/>
</dbReference>
<dbReference type="RefSeq" id="WP_012834259.1">
    <property type="nucleotide sequence ID" value="NC_013441.1"/>
</dbReference>
<dbReference type="SMR" id="D0LDT1"/>
<dbReference type="STRING" id="526226.Gbro_2463"/>
<dbReference type="KEGG" id="gbr:Gbro_2463"/>
<dbReference type="eggNOG" id="COG0638">
    <property type="taxonomic scope" value="Bacteria"/>
</dbReference>
<dbReference type="HOGENOM" id="CLU_035750_2_0_11"/>
<dbReference type="UniPathway" id="UPA00997"/>
<dbReference type="Proteomes" id="UP000001219">
    <property type="component" value="Chromosome"/>
</dbReference>
<dbReference type="GO" id="GO:0005737">
    <property type="term" value="C:cytoplasm"/>
    <property type="evidence" value="ECO:0007669"/>
    <property type="project" value="UniProtKB-SubCell"/>
</dbReference>
<dbReference type="GO" id="GO:0019774">
    <property type="term" value="C:proteasome core complex, beta-subunit complex"/>
    <property type="evidence" value="ECO:0007669"/>
    <property type="project" value="UniProtKB-UniRule"/>
</dbReference>
<dbReference type="GO" id="GO:0004298">
    <property type="term" value="F:threonine-type endopeptidase activity"/>
    <property type="evidence" value="ECO:0007669"/>
    <property type="project" value="UniProtKB-UniRule"/>
</dbReference>
<dbReference type="GO" id="GO:0019941">
    <property type="term" value="P:modification-dependent protein catabolic process"/>
    <property type="evidence" value="ECO:0007669"/>
    <property type="project" value="UniProtKB-UniRule"/>
</dbReference>
<dbReference type="GO" id="GO:0010498">
    <property type="term" value="P:proteasomal protein catabolic process"/>
    <property type="evidence" value="ECO:0007669"/>
    <property type="project" value="UniProtKB-UniRule"/>
</dbReference>
<dbReference type="CDD" id="cd01906">
    <property type="entry name" value="proteasome_protease_HslV"/>
    <property type="match status" value="1"/>
</dbReference>
<dbReference type="FunFam" id="3.60.20.10:FF:000046">
    <property type="entry name" value="Proteasome subunit beta"/>
    <property type="match status" value="1"/>
</dbReference>
<dbReference type="Gene3D" id="3.60.20.10">
    <property type="entry name" value="Glutamine Phosphoribosylpyrophosphate, subunit 1, domain 1"/>
    <property type="match status" value="1"/>
</dbReference>
<dbReference type="HAMAP" id="MF_02113_B">
    <property type="entry name" value="Proteasome_B_B"/>
    <property type="match status" value="1"/>
</dbReference>
<dbReference type="InterPro" id="IPR029055">
    <property type="entry name" value="Ntn_hydrolases_N"/>
</dbReference>
<dbReference type="InterPro" id="IPR001353">
    <property type="entry name" value="Proteasome_sua/b"/>
</dbReference>
<dbReference type="InterPro" id="IPR023333">
    <property type="entry name" value="Proteasome_suB-type"/>
</dbReference>
<dbReference type="InterPro" id="IPR022483">
    <property type="entry name" value="PSB_actinobac"/>
</dbReference>
<dbReference type="NCBIfam" id="TIGR03690">
    <property type="entry name" value="20S_bact_beta"/>
    <property type="match status" value="1"/>
</dbReference>
<dbReference type="PANTHER" id="PTHR32194:SF0">
    <property type="entry name" value="ATP-DEPENDENT PROTEASE SUBUNIT HSLV"/>
    <property type="match status" value="1"/>
</dbReference>
<dbReference type="PANTHER" id="PTHR32194">
    <property type="entry name" value="METALLOPROTEASE TLDD"/>
    <property type="match status" value="1"/>
</dbReference>
<dbReference type="Pfam" id="PF00227">
    <property type="entry name" value="Proteasome"/>
    <property type="match status" value="1"/>
</dbReference>
<dbReference type="SUPFAM" id="SSF56235">
    <property type="entry name" value="N-terminal nucleophile aminohydrolases (Ntn hydrolases)"/>
    <property type="match status" value="1"/>
</dbReference>
<dbReference type="PROSITE" id="PS51476">
    <property type="entry name" value="PROTEASOME_BETA_2"/>
    <property type="match status" value="1"/>
</dbReference>
<protein>
    <recommendedName>
        <fullName evidence="1">Proteasome subunit beta</fullName>
        <ecNumber evidence="1">3.4.25.1</ecNumber>
    </recommendedName>
    <alternativeName>
        <fullName evidence="1">20S proteasome beta subunit</fullName>
    </alternativeName>
    <alternativeName>
        <fullName evidence="1">Proteasome core protein PrcB</fullName>
    </alternativeName>
</protein>
<comment type="function">
    <text evidence="1">Component of the proteasome core, a large protease complex with broad specificity involved in protein degradation.</text>
</comment>
<comment type="catalytic activity">
    <reaction evidence="1">
        <text>Cleavage of peptide bonds with very broad specificity.</text>
        <dbReference type="EC" id="3.4.25.1"/>
    </reaction>
</comment>
<comment type="activity regulation">
    <text evidence="1">The formation of the proteasomal ATPase ARC-20S proteasome complex, likely via the docking of the C-termini of ARC into the intersubunit pockets in the alpha-rings, may trigger opening of the gate for substrate entry. Interconversion between the open-gate and close-gate conformations leads to a dynamic regulation of the 20S proteasome proteolysis activity.</text>
</comment>
<comment type="pathway">
    <text evidence="1">Protein degradation; proteasomal Pup-dependent pathway.</text>
</comment>
<comment type="subunit">
    <text evidence="1">The 20S proteasome core is composed of 14 alpha and 14 beta subunits that assemble into four stacked heptameric rings, resulting in a barrel-shaped structure. The two inner rings, each composed of seven catalytic beta subunits, are sandwiched by two outer rings, each composed of seven alpha subunits. The catalytic chamber with the active sites is on the inside of the barrel. Has a gated structure, the ends of the cylinder being occluded by the N-termini of the alpha-subunits. Is capped by the proteasome-associated ATPase, ARC.</text>
</comment>
<comment type="subcellular location">
    <subcellularLocation>
        <location evidence="1">Cytoplasm</location>
    </subcellularLocation>
</comment>
<comment type="similarity">
    <text evidence="1">Belongs to the peptidase T1B family.</text>
</comment>
<accession>D0LDT1</accession>
<gene>
    <name evidence="1" type="primary">prcB</name>
    <name type="ordered locus">Gbro_2463</name>
</gene>
<keyword id="KW-0068">Autocatalytic cleavage</keyword>
<keyword id="KW-0963">Cytoplasm</keyword>
<keyword id="KW-0378">Hydrolase</keyword>
<keyword id="KW-0645">Protease</keyword>
<keyword id="KW-0647">Proteasome</keyword>
<keyword id="KW-1185">Reference proteome</keyword>
<keyword id="KW-0888">Threonine protease</keyword>
<keyword id="KW-0865">Zymogen</keyword>
<feature type="propeptide" id="PRO_0000397512" description="Removed in mature form; by autocatalysis" evidence="1">
    <location>
        <begin position="1"/>
        <end position="62"/>
    </location>
</feature>
<feature type="chain" id="PRO_0000397513" description="Proteasome subunit beta">
    <location>
        <begin position="63"/>
        <end position="292"/>
    </location>
</feature>
<feature type="active site" description="Nucleophile" evidence="1">
    <location>
        <position position="63"/>
    </location>
</feature>
<name>PSB_GORB4</name>
<reference key="1">
    <citation type="submission" date="2009-10" db="EMBL/GenBank/DDBJ databases">
        <title>The complete chromosome of Gordonia bronchialis DSM 43247.</title>
        <authorList>
            <consortium name="US DOE Joint Genome Institute (JGI-PGF)"/>
            <person name="Lucas S."/>
            <person name="Copeland A."/>
            <person name="Lapidus A."/>
            <person name="Glavina del Rio T."/>
            <person name="Dalin E."/>
            <person name="Tice H."/>
            <person name="Bruce D."/>
            <person name="Goodwin L."/>
            <person name="Pitluck S."/>
            <person name="Kyrpides N."/>
            <person name="Mavromatis K."/>
            <person name="Ivanova N."/>
            <person name="Ovchinnikova G."/>
            <person name="Saunders E."/>
            <person name="Brettin T."/>
            <person name="Detter J.C."/>
            <person name="Han C."/>
            <person name="Larimer F."/>
            <person name="Land M."/>
            <person name="Hauser L."/>
            <person name="Markowitz V."/>
            <person name="Cheng J.-F."/>
            <person name="Hugenholtz P."/>
            <person name="Woyke T."/>
            <person name="Wu D."/>
            <person name="Jando M."/>
            <person name="Schneider S."/>
            <person name="Goeker M."/>
            <person name="Klenk H.-P."/>
            <person name="Eisen J.A."/>
        </authorList>
    </citation>
    <scope>NUCLEOTIDE SEQUENCE [LARGE SCALE GENOMIC DNA]</scope>
    <source>
        <strain>ATCC 25592 / DSM 43247 / BCRC 13721 / JCM 3198 / KCTC 3076 / NBRC 16047 / NCTC 10667</strain>
    </source>
</reference>
<evidence type="ECO:0000255" key="1">
    <source>
        <dbReference type="HAMAP-Rule" id="MF_02113"/>
    </source>
</evidence>